<accession>B9DN75</accession>
<name>SYY_STACT</name>
<keyword id="KW-0030">Aminoacyl-tRNA synthetase</keyword>
<keyword id="KW-0067">ATP-binding</keyword>
<keyword id="KW-0963">Cytoplasm</keyword>
<keyword id="KW-0436">Ligase</keyword>
<keyword id="KW-0547">Nucleotide-binding</keyword>
<keyword id="KW-0648">Protein biosynthesis</keyword>
<keyword id="KW-1185">Reference proteome</keyword>
<keyword id="KW-0694">RNA-binding</keyword>
<organism>
    <name type="scientific">Staphylococcus carnosus (strain TM300)</name>
    <dbReference type="NCBI Taxonomy" id="396513"/>
    <lineage>
        <taxon>Bacteria</taxon>
        <taxon>Bacillati</taxon>
        <taxon>Bacillota</taxon>
        <taxon>Bacilli</taxon>
        <taxon>Bacillales</taxon>
        <taxon>Staphylococcaceae</taxon>
        <taxon>Staphylococcus</taxon>
    </lineage>
</organism>
<sequence>MTNELLKDLEWRGLIYQQTDAEGLENILNKEQVTLYCGVDPTADSMHIGHLLPLLTLRRFQNHGHKPIVLIGGGTGMIGDPSGKTDERVLQTEEQVEQNVRGIGNQMDKIFDFSGKEAAQLVNNRDWLGKISLIDFLRDYGKHVGVNYMLGKDSVQSRLENGISYTEFTYMILQAIDFGHLNREYNCKVQIGGSDQWGNITSGIELMRRMYGQTEAYGITIPLVTKADGKKFGKSEAGTVWLDAEKTSPYELYQFWINTTDADVIKFLKYFTFLDKEEIERLEQSKEEAPHLREAQKALAENVVRFIHGEGALNDAIRISEALFSGDLKALSSDELREGFKDVPQAEVSNATTNIVDFIVEAGISSSKRQAREDVSNGAIYINGEREQDLKYEISEADKIDNEFTIVRRGKKKYFMVKYK</sequence>
<gene>
    <name evidence="1" type="primary">tyrS</name>
    <name type="ordered locus">Sca_1335</name>
</gene>
<dbReference type="EC" id="6.1.1.1" evidence="1"/>
<dbReference type="EMBL" id="AM295250">
    <property type="protein sequence ID" value="CAL28240.1"/>
    <property type="molecule type" value="Genomic_DNA"/>
</dbReference>
<dbReference type="RefSeq" id="WP_015900580.1">
    <property type="nucleotide sequence ID" value="NC_012121.1"/>
</dbReference>
<dbReference type="SMR" id="B9DN75"/>
<dbReference type="GeneID" id="93793755"/>
<dbReference type="KEGG" id="sca:SCA_1335"/>
<dbReference type="eggNOG" id="COG0162">
    <property type="taxonomic scope" value="Bacteria"/>
</dbReference>
<dbReference type="HOGENOM" id="CLU_024003_0_3_9"/>
<dbReference type="OrthoDB" id="9804243at2"/>
<dbReference type="BioCyc" id="SCAR396513:SCA_RS06640-MONOMER"/>
<dbReference type="Proteomes" id="UP000000444">
    <property type="component" value="Chromosome"/>
</dbReference>
<dbReference type="GO" id="GO:0005829">
    <property type="term" value="C:cytosol"/>
    <property type="evidence" value="ECO:0007669"/>
    <property type="project" value="TreeGrafter"/>
</dbReference>
<dbReference type="GO" id="GO:0005524">
    <property type="term" value="F:ATP binding"/>
    <property type="evidence" value="ECO:0007669"/>
    <property type="project" value="UniProtKB-UniRule"/>
</dbReference>
<dbReference type="GO" id="GO:0003723">
    <property type="term" value="F:RNA binding"/>
    <property type="evidence" value="ECO:0007669"/>
    <property type="project" value="UniProtKB-KW"/>
</dbReference>
<dbReference type="GO" id="GO:0004831">
    <property type="term" value="F:tyrosine-tRNA ligase activity"/>
    <property type="evidence" value="ECO:0007669"/>
    <property type="project" value="UniProtKB-UniRule"/>
</dbReference>
<dbReference type="GO" id="GO:0006437">
    <property type="term" value="P:tyrosyl-tRNA aminoacylation"/>
    <property type="evidence" value="ECO:0007669"/>
    <property type="project" value="UniProtKB-UniRule"/>
</dbReference>
<dbReference type="CDD" id="cd00165">
    <property type="entry name" value="S4"/>
    <property type="match status" value="1"/>
</dbReference>
<dbReference type="CDD" id="cd00395">
    <property type="entry name" value="Tyr_Trp_RS_core"/>
    <property type="match status" value="1"/>
</dbReference>
<dbReference type="FunFam" id="1.10.240.10:FF:000001">
    <property type="entry name" value="Tyrosine--tRNA ligase"/>
    <property type="match status" value="1"/>
</dbReference>
<dbReference type="FunFam" id="3.40.50.620:FF:000008">
    <property type="entry name" value="Tyrosine--tRNA ligase"/>
    <property type="match status" value="1"/>
</dbReference>
<dbReference type="Gene3D" id="3.40.50.620">
    <property type="entry name" value="HUPs"/>
    <property type="match status" value="1"/>
</dbReference>
<dbReference type="Gene3D" id="3.10.290.10">
    <property type="entry name" value="RNA-binding S4 domain"/>
    <property type="match status" value="1"/>
</dbReference>
<dbReference type="Gene3D" id="1.10.240.10">
    <property type="entry name" value="Tyrosyl-Transfer RNA Synthetase"/>
    <property type="match status" value="1"/>
</dbReference>
<dbReference type="HAMAP" id="MF_02006">
    <property type="entry name" value="Tyr_tRNA_synth_type1"/>
    <property type="match status" value="1"/>
</dbReference>
<dbReference type="InterPro" id="IPR001412">
    <property type="entry name" value="aa-tRNA-synth_I_CS"/>
</dbReference>
<dbReference type="InterPro" id="IPR002305">
    <property type="entry name" value="aa-tRNA-synth_Ic"/>
</dbReference>
<dbReference type="InterPro" id="IPR014729">
    <property type="entry name" value="Rossmann-like_a/b/a_fold"/>
</dbReference>
<dbReference type="InterPro" id="IPR002942">
    <property type="entry name" value="S4_RNA-bd"/>
</dbReference>
<dbReference type="InterPro" id="IPR036986">
    <property type="entry name" value="S4_RNA-bd_sf"/>
</dbReference>
<dbReference type="InterPro" id="IPR054608">
    <property type="entry name" value="SYY-like_C"/>
</dbReference>
<dbReference type="InterPro" id="IPR002307">
    <property type="entry name" value="Tyr-tRNA-ligase"/>
</dbReference>
<dbReference type="InterPro" id="IPR024088">
    <property type="entry name" value="Tyr-tRNA-ligase_bac-type"/>
</dbReference>
<dbReference type="InterPro" id="IPR024107">
    <property type="entry name" value="Tyr-tRNA-ligase_bac_1"/>
</dbReference>
<dbReference type="NCBIfam" id="TIGR00234">
    <property type="entry name" value="tyrS"/>
    <property type="match status" value="1"/>
</dbReference>
<dbReference type="PANTHER" id="PTHR11766:SF0">
    <property type="entry name" value="TYROSINE--TRNA LIGASE, MITOCHONDRIAL"/>
    <property type="match status" value="1"/>
</dbReference>
<dbReference type="PANTHER" id="PTHR11766">
    <property type="entry name" value="TYROSYL-TRNA SYNTHETASE"/>
    <property type="match status" value="1"/>
</dbReference>
<dbReference type="Pfam" id="PF22421">
    <property type="entry name" value="SYY_C-terminal"/>
    <property type="match status" value="1"/>
</dbReference>
<dbReference type="Pfam" id="PF00579">
    <property type="entry name" value="tRNA-synt_1b"/>
    <property type="match status" value="1"/>
</dbReference>
<dbReference type="PRINTS" id="PR01040">
    <property type="entry name" value="TRNASYNTHTYR"/>
</dbReference>
<dbReference type="SMART" id="SM00363">
    <property type="entry name" value="S4"/>
    <property type="match status" value="1"/>
</dbReference>
<dbReference type="SUPFAM" id="SSF55174">
    <property type="entry name" value="Alpha-L RNA-binding motif"/>
    <property type="match status" value="1"/>
</dbReference>
<dbReference type="SUPFAM" id="SSF52374">
    <property type="entry name" value="Nucleotidylyl transferase"/>
    <property type="match status" value="1"/>
</dbReference>
<dbReference type="PROSITE" id="PS00178">
    <property type="entry name" value="AA_TRNA_LIGASE_I"/>
    <property type="match status" value="1"/>
</dbReference>
<dbReference type="PROSITE" id="PS50889">
    <property type="entry name" value="S4"/>
    <property type="match status" value="1"/>
</dbReference>
<evidence type="ECO:0000255" key="1">
    <source>
        <dbReference type="HAMAP-Rule" id="MF_02006"/>
    </source>
</evidence>
<proteinExistence type="inferred from homology"/>
<reference key="1">
    <citation type="journal article" date="2009" name="Appl. Environ. Microbiol.">
        <title>Genome analysis of the meat starter culture bacterium Staphylococcus carnosus TM300.</title>
        <authorList>
            <person name="Rosenstein R."/>
            <person name="Nerz C."/>
            <person name="Biswas L."/>
            <person name="Resch A."/>
            <person name="Raddatz G."/>
            <person name="Schuster S.C."/>
            <person name="Goetz F."/>
        </authorList>
    </citation>
    <scope>NUCLEOTIDE SEQUENCE [LARGE SCALE GENOMIC DNA]</scope>
    <source>
        <strain>TM300</strain>
    </source>
</reference>
<comment type="function">
    <text evidence="1">Catalyzes the attachment of tyrosine to tRNA(Tyr) in a two-step reaction: tyrosine is first activated by ATP to form Tyr-AMP and then transferred to the acceptor end of tRNA(Tyr).</text>
</comment>
<comment type="catalytic activity">
    <reaction evidence="1">
        <text>tRNA(Tyr) + L-tyrosine + ATP = L-tyrosyl-tRNA(Tyr) + AMP + diphosphate + H(+)</text>
        <dbReference type="Rhea" id="RHEA:10220"/>
        <dbReference type="Rhea" id="RHEA-COMP:9706"/>
        <dbReference type="Rhea" id="RHEA-COMP:9707"/>
        <dbReference type="ChEBI" id="CHEBI:15378"/>
        <dbReference type="ChEBI" id="CHEBI:30616"/>
        <dbReference type="ChEBI" id="CHEBI:33019"/>
        <dbReference type="ChEBI" id="CHEBI:58315"/>
        <dbReference type="ChEBI" id="CHEBI:78442"/>
        <dbReference type="ChEBI" id="CHEBI:78536"/>
        <dbReference type="ChEBI" id="CHEBI:456215"/>
        <dbReference type="EC" id="6.1.1.1"/>
    </reaction>
</comment>
<comment type="subunit">
    <text evidence="1">Homodimer.</text>
</comment>
<comment type="subcellular location">
    <subcellularLocation>
        <location evidence="1">Cytoplasm</location>
    </subcellularLocation>
</comment>
<comment type="similarity">
    <text evidence="1">Belongs to the class-I aminoacyl-tRNA synthetase family. TyrS type 1 subfamily.</text>
</comment>
<feature type="chain" id="PRO_1000189331" description="Tyrosine--tRNA ligase">
    <location>
        <begin position="1"/>
        <end position="420"/>
    </location>
</feature>
<feature type="domain" description="S4 RNA-binding" evidence="1">
    <location>
        <begin position="353"/>
        <end position="420"/>
    </location>
</feature>
<feature type="short sequence motif" description="'HIGH' region">
    <location>
        <begin position="41"/>
        <end position="50"/>
    </location>
</feature>
<feature type="short sequence motif" description="'KMSKS' region">
    <location>
        <begin position="231"/>
        <end position="235"/>
    </location>
</feature>
<feature type="binding site" evidence="1">
    <location>
        <position position="36"/>
    </location>
    <ligand>
        <name>L-tyrosine</name>
        <dbReference type="ChEBI" id="CHEBI:58315"/>
    </ligand>
</feature>
<feature type="binding site" evidence="1">
    <location>
        <position position="170"/>
    </location>
    <ligand>
        <name>L-tyrosine</name>
        <dbReference type="ChEBI" id="CHEBI:58315"/>
    </ligand>
</feature>
<feature type="binding site" evidence="1">
    <location>
        <position position="174"/>
    </location>
    <ligand>
        <name>L-tyrosine</name>
        <dbReference type="ChEBI" id="CHEBI:58315"/>
    </ligand>
</feature>
<feature type="binding site" evidence="1">
    <location>
        <position position="234"/>
    </location>
    <ligand>
        <name>ATP</name>
        <dbReference type="ChEBI" id="CHEBI:30616"/>
    </ligand>
</feature>
<protein>
    <recommendedName>
        <fullName evidence="1">Tyrosine--tRNA ligase</fullName>
        <ecNumber evidence="1">6.1.1.1</ecNumber>
    </recommendedName>
    <alternativeName>
        <fullName evidence="1">Tyrosyl-tRNA synthetase</fullName>
        <shortName evidence="1">TyrRS</shortName>
    </alternativeName>
</protein>